<keyword id="KW-0963">Cytoplasm</keyword>
<keyword id="KW-0342">GTP-binding</keyword>
<keyword id="KW-0378">Hydrolase</keyword>
<keyword id="KW-0460">Magnesium</keyword>
<keyword id="KW-0479">Metal-binding</keyword>
<keyword id="KW-0547">Nucleotide-binding</keyword>
<keyword id="KW-0630">Potassium</keyword>
<keyword id="KW-0819">tRNA processing</keyword>
<comment type="function">
    <text evidence="1">Exhibits a very high intrinsic GTPase hydrolysis rate. Involved in the addition of a carboxymethylaminomethyl (cmnm) group at the wobble position (U34) of certain tRNAs, forming tRNA-cmnm(5)s(2)U34.</text>
</comment>
<comment type="cofactor">
    <cofactor evidence="1">
        <name>K(+)</name>
        <dbReference type="ChEBI" id="CHEBI:29103"/>
    </cofactor>
    <text evidence="1">Binds 1 potassium ion per subunit.</text>
</comment>
<comment type="subunit">
    <text evidence="1">Homodimer. Heterotetramer of two MnmE and two MnmG subunits.</text>
</comment>
<comment type="subcellular location">
    <subcellularLocation>
        <location evidence="1">Cytoplasm</location>
    </subcellularLocation>
</comment>
<comment type="similarity">
    <text evidence="1">Belongs to the TRAFAC class TrmE-Era-EngA-EngB-Septin-like GTPase superfamily. TrmE GTPase family.</text>
</comment>
<name>MNME_ENT38</name>
<sequence length="454" mass="49031">MSHNDTIVAQATPPGRGGVGILRISGLKAREVAEAVLGKLPKPRYADYLPFNDADGTALDQGIALWFPGPNSFTGEDVLELQGHGGPVILDLLLKRILTLPGLRIAKPGEFSERAFLNDKLDLAQAEAIADLIDASSEQAARSALNSLQGAFSTRVNHLVEALTHLRIYVEAAIDFPDEEIDFLSDGKIEAQLNTVMADLDAVRAEARQGSLLREGMKVVIAGRPNAGKSSLLNALAGREAAIVTDIAGTTRDVLREHIHIDGMPLHIIDTAGLRDASDEVERIGIERAWQEIEQADRVLFMVDGTTTSAVDPADIWPDFIARLPAKLPITVVRNKADMTGETLGLSDVNGHSLIRLSARTGEGVEDLRNHLKQSMGFETNMEGGFLARRRHLQALEAAANHLDQGKAQLLGAWAGELLAEELRLAQQSLSEITGEFTSDDLLGRIFSSFCIGK</sequence>
<reference key="1">
    <citation type="journal article" date="2009" name="Int. J. Food Microbiol.">
        <title>Phylogeny and prediction of genetic similarity of Cronobacter and related taxa by multilocus sequence analysis (MLSA).</title>
        <authorList>
            <person name="Kuhnert P."/>
            <person name="Korczak B.M."/>
            <person name="Stephan R."/>
            <person name="Joosten H."/>
            <person name="Iversen C."/>
        </authorList>
    </citation>
    <scope>NUCLEOTIDE SEQUENCE [GENOMIC DNA]</scope>
    <source>
        <strain>638</strain>
    </source>
</reference>
<reference key="2">
    <citation type="journal article" date="2010" name="PLoS Genet.">
        <title>Genome sequence of the plant growth promoting endophytic bacterium Enterobacter sp. 638.</title>
        <authorList>
            <person name="Taghavi S."/>
            <person name="van der Lelie D."/>
            <person name="Hoffman A."/>
            <person name="Zhang Y.B."/>
            <person name="Walla M.D."/>
            <person name="Vangronsveld J."/>
            <person name="Newman L."/>
            <person name="Monchy S."/>
        </authorList>
    </citation>
    <scope>NUCLEOTIDE SEQUENCE [LARGE SCALE GENOMIC DNA]</scope>
    <source>
        <strain>638</strain>
    </source>
</reference>
<protein>
    <recommendedName>
        <fullName evidence="1">tRNA modification GTPase MnmE</fullName>
        <ecNumber evidence="1">3.6.-.-</ecNumber>
    </recommendedName>
</protein>
<feature type="chain" id="PRO_1000060039" description="tRNA modification GTPase MnmE">
    <location>
        <begin position="1"/>
        <end position="454"/>
    </location>
</feature>
<feature type="domain" description="TrmE-type G">
    <location>
        <begin position="216"/>
        <end position="377"/>
    </location>
</feature>
<feature type="binding site" evidence="1">
    <location>
        <position position="23"/>
    </location>
    <ligand>
        <name>(6S)-5-formyl-5,6,7,8-tetrahydrofolate</name>
        <dbReference type="ChEBI" id="CHEBI:57457"/>
    </ligand>
</feature>
<feature type="binding site" evidence="1">
    <location>
        <position position="80"/>
    </location>
    <ligand>
        <name>(6S)-5-formyl-5,6,7,8-tetrahydrofolate</name>
        <dbReference type="ChEBI" id="CHEBI:57457"/>
    </ligand>
</feature>
<feature type="binding site" evidence="1">
    <location>
        <position position="120"/>
    </location>
    <ligand>
        <name>(6S)-5-formyl-5,6,7,8-tetrahydrofolate</name>
        <dbReference type="ChEBI" id="CHEBI:57457"/>
    </ligand>
</feature>
<feature type="binding site" evidence="1">
    <location>
        <begin position="226"/>
        <end position="231"/>
    </location>
    <ligand>
        <name>GTP</name>
        <dbReference type="ChEBI" id="CHEBI:37565"/>
    </ligand>
</feature>
<feature type="binding site" evidence="1">
    <location>
        <position position="226"/>
    </location>
    <ligand>
        <name>K(+)</name>
        <dbReference type="ChEBI" id="CHEBI:29103"/>
    </ligand>
</feature>
<feature type="binding site" evidence="1">
    <location>
        <position position="230"/>
    </location>
    <ligand>
        <name>Mg(2+)</name>
        <dbReference type="ChEBI" id="CHEBI:18420"/>
    </ligand>
</feature>
<feature type="binding site" evidence="1">
    <location>
        <begin position="245"/>
        <end position="251"/>
    </location>
    <ligand>
        <name>GTP</name>
        <dbReference type="ChEBI" id="CHEBI:37565"/>
    </ligand>
</feature>
<feature type="binding site" evidence="1">
    <location>
        <position position="245"/>
    </location>
    <ligand>
        <name>K(+)</name>
        <dbReference type="ChEBI" id="CHEBI:29103"/>
    </ligand>
</feature>
<feature type="binding site" evidence="1">
    <location>
        <position position="247"/>
    </location>
    <ligand>
        <name>K(+)</name>
        <dbReference type="ChEBI" id="CHEBI:29103"/>
    </ligand>
</feature>
<feature type="binding site" evidence="1">
    <location>
        <position position="250"/>
    </location>
    <ligand>
        <name>K(+)</name>
        <dbReference type="ChEBI" id="CHEBI:29103"/>
    </ligand>
</feature>
<feature type="binding site" evidence="1">
    <location>
        <position position="251"/>
    </location>
    <ligand>
        <name>Mg(2+)</name>
        <dbReference type="ChEBI" id="CHEBI:18420"/>
    </ligand>
</feature>
<feature type="binding site" evidence="1">
    <location>
        <begin position="270"/>
        <end position="273"/>
    </location>
    <ligand>
        <name>GTP</name>
        <dbReference type="ChEBI" id="CHEBI:37565"/>
    </ligand>
</feature>
<feature type="binding site" evidence="1">
    <location>
        <begin position="335"/>
        <end position="338"/>
    </location>
    <ligand>
        <name>GTP</name>
        <dbReference type="ChEBI" id="CHEBI:37565"/>
    </ligand>
</feature>
<feature type="binding site" evidence="1">
    <location>
        <begin position="358"/>
        <end position="360"/>
    </location>
    <ligand>
        <name>GTP</name>
        <dbReference type="ChEBI" id="CHEBI:37565"/>
    </ligand>
</feature>
<feature type="binding site" evidence="1">
    <location>
        <position position="454"/>
    </location>
    <ligand>
        <name>(6S)-5-formyl-5,6,7,8-tetrahydrofolate</name>
        <dbReference type="ChEBI" id="CHEBI:57457"/>
    </ligand>
</feature>
<evidence type="ECO:0000255" key="1">
    <source>
        <dbReference type="HAMAP-Rule" id="MF_00379"/>
    </source>
</evidence>
<dbReference type="EC" id="3.6.-.-" evidence="1"/>
<dbReference type="EMBL" id="EU569362">
    <property type="protein sequence ID" value="ACE63689.1"/>
    <property type="molecule type" value="Genomic_DNA"/>
</dbReference>
<dbReference type="EMBL" id="CP000653">
    <property type="protein sequence ID" value="ABP62801.1"/>
    <property type="molecule type" value="Genomic_DNA"/>
</dbReference>
<dbReference type="RefSeq" id="WP_015961103.1">
    <property type="nucleotide sequence ID" value="NC_009436.1"/>
</dbReference>
<dbReference type="SMR" id="A4WGH1"/>
<dbReference type="STRING" id="399742.Ent638_4148"/>
<dbReference type="KEGG" id="ent:Ent638_4148"/>
<dbReference type="eggNOG" id="COG0486">
    <property type="taxonomic scope" value="Bacteria"/>
</dbReference>
<dbReference type="HOGENOM" id="CLU_019624_4_1_6"/>
<dbReference type="OrthoDB" id="9805918at2"/>
<dbReference type="Proteomes" id="UP000000230">
    <property type="component" value="Chromosome"/>
</dbReference>
<dbReference type="GO" id="GO:0005829">
    <property type="term" value="C:cytosol"/>
    <property type="evidence" value="ECO:0007669"/>
    <property type="project" value="TreeGrafter"/>
</dbReference>
<dbReference type="GO" id="GO:0005525">
    <property type="term" value="F:GTP binding"/>
    <property type="evidence" value="ECO:0007669"/>
    <property type="project" value="UniProtKB-UniRule"/>
</dbReference>
<dbReference type="GO" id="GO:0003924">
    <property type="term" value="F:GTPase activity"/>
    <property type="evidence" value="ECO:0007669"/>
    <property type="project" value="UniProtKB-UniRule"/>
</dbReference>
<dbReference type="GO" id="GO:0046872">
    <property type="term" value="F:metal ion binding"/>
    <property type="evidence" value="ECO:0007669"/>
    <property type="project" value="UniProtKB-KW"/>
</dbReference>
<dbReference type="GO" id="GO:0030488">
    <property type="term" value="P:tRNA methylation"/>
    <property type="evidence" value="ECO:0007669"/>
    <property type="project" value="TreeGrafter"/>
</dbReference>
<dbReference type="GO" id="GO:0002098">
    <property type="term" value="P:tRNA wobble uridine modification"/>
    <property type="evidence" value="ECO:0007669"/>
    <property type="project" value="TreeGrafter"/>
</dbReference>
<dbReference type="CDD" id="cd04164">
    <property type="entry name" value="trmE"/>
    <property type="match status" value="1"/>
</dbReference>
<dbReference type="CDD" id="cd14858">
    <property type="entry name" value="TrmE_N"/>
    <property type="match status" value="1"/>
</dbReference>
<dbReference type="FunFam" id="3.30.1360.120:FF:000001">
    <property type="entry name" value="tRNA modification GTPase MnmE"/>
    <property type="match status" value="1"/>
</dbReference>
<dbReference type="FunFam" id="3.40.50.300:FF:000249">
    <property type="entry name" value="tRNA modification GTPase MnmE"/>
    <property type="match status" value="1"/>
</dbReference>
<dbReference type="Gene3D" id="3.40.50.300">
    <property type="entry name" value="P-loop containing nucleotide triphosphate hydrolases"/>
    <property type="match status" value="1"/>
</dbReference>
<dbReference type="Gene3D" id="3.30.1360.120">
    <property type="entry name" value="Probable tRNA modification gtpase trme, domain 1"/>
    <property type="match status" value="1"/>
</dbReference>
<dbReference type="Gene3D" id="1.20.120.430">
    <property type="entry name" value="tRNA modification GTPase MnmE domain 2"/>
    <property type="match status" value="1"/>
</dbReference>
<dbReference type="HAMAP" id="MF_00379">
    <property type="entry name" value="GTPase_MnmE"/>
    <property type="match status" value="1"/>
</dbReference>
<dbReference type="InterPro" id="IPR031168">
    <property type="entry name" value="G_TrmE"/>
</dbReference>
<dbReference type="InterPro" id="IPR006073">
    <property type="entry name" value="GTP-bd"/>
</dbReference>
<dbReference type="InterPro" id="IPR018948">
    <property type="entry name" value="GTP-bd_TrmE_N"/>
</dbReference>
<dbReference type="InterPro" id="IPR004520">
    <property type="entry name" value="GTPase_MnmE"/>
</dbReference>
<dbReference type="InterPro" id="IPR027368">
    <property type="entry name" value="MnmE_dom2"/>
</dbReference>
<dbReference type="InterPro" id="IPR025867">
    <property type="entry name" value="MnmE_helical"/>
</dbReference>
<dbReference type="InterPro" id="IPR027417">
    <property type="entry name" value="P-loop_NTPase"/>
</dbReference>
<dbReference type="InterPro" id="IPR005225">
    <property type="entry name" value="Small_GTP-bd"/>
</dbReference>
<dbReference type="InterPro" id="IPR027266">
    <property type="entry name" value="TrmE/GcvT_dom1"/>
</dbReference>
<dbReference type="NCBIfam" id="TIGR00450">
    <property type="entry name" value="mnmE_trmE_thdF"/>
    <property type="match status" value="1"/>
</dbReference>
<dbReference type="NCBIfam" id="NF003661">
    <property type="entry name" value="PRK05291.1-3"/>
    <property type="match status" value="1"/>
</dbReference>
<dbReference type="NCBIfam" id="TIGR00231">
    <property type="entry name" value="small_GTP"/>
    <property type="match status" value="1"/>
</dbReference>
<dbReference type="PANTHER" id="PTHR42714">
    <property type="entry name" value="TRNA MODIFICATION GTPASE GTPBP3"/>
    <property type="match status" value="1"/>
</dbReference>
<dbReference type="PANTHER" id="PTHR42714:SF2">
    <property type="entry name" value="TRNA MODIFICATION GTPASE GTPBP3, MITOCHONDRIAL"/>
    <property type="match status" value="1"/>
</dbReference>
<dbReference type="Pfam" id="PF01926">
    <property type="entry name" value="MMR_HSR1"/>
    <property type="match status" value="1"/>
</dbReference>
<dbReference type="Pfam" id="PF12631">
    <property type="entry name" value="MnmE_helical"/>
    <property type="match status" value="1"/>
</dbReference>
<dbReference type="Pfam" id="PF10396">
    <property type="entry name" value="TrmE_N"/>
    <property type="match status" value="1"/>
</dbReference>
<dbReference type="SUPFAM" id="SSF52540">
    <property type="entry name" value="P-loop containing nucleoside triphosphate hydrolases"/>
    <property type="match status" value="1"/>
</dbReference>
<dbReference type="SUPFAM" id="SSF116878">
    <property type="entry name" value="TrmE connector domain"/>
    <property type="match status" value="1"/>
</dbReference>
<dbReference type="PROSITE" id="PS51709">
    <property type="entry name" value="G_TRME"/>
    <property type="match status" value="1"/>
</dbReference>
<gene>
    <name evidence="1" type="primary">mnmE</name>
    <name evidence="1" type="synonym">trmE</name>
    <name type="ordered locus">Ent638_4148</name>
</gene>
<organism>
    <name type="scientific">Enterobacter sp. (strain 638)</name>
    <dbReference type="NCBI Taxonomy" id="399742"/>
    <lineage>
        <taxon>Bacteria</taxon>
        <taxon>Pseudomonadati</taxon>
        <taxon>Pseudomonadota</taxon>
        <taxon>Gammaproteobacteria</taxon>
        <taxon>Enterobacterales</taxon>
        <taxon>Enterobacteriaceae</taxon>
        <taxon>Enterobacter</taxon>
    </lineage>
</organism>
<accession>A4WGH1</accession>
<accession>C1IFY3</accession>
<proteinExistence type="inferred from homology"/>